<evidence type="ECO:0000250" key="1">
    <source>
        <dbReference type="UniProtKB" id="Q9ZQS5"/>
    </source>
</evidence>
<evidence type="ECO:0000255" key="2"/>
<evidence type="ECO:0000303" key="3">
    <source>
    </source>
</evidence>
<evidence type="ECO:0000305" key="4"/>
<evidence type="ECO:0000305" key="5">
    <source>
    </source>
</evidence>
<dbReference type="EMBL" id="DQ531591">
    <property type="protein sequence ID" value="ABF73018.1"/>
    <property type="molecule type" value="mRNA"/>
</dbReference>
<dbReference type="SMR" id="Q00GL7"/>
<dbReference type="GO" id="GO:0009535">
    <property type="term" value="C:chloroplast thylakoid membrane"/>
    <property type="evidence" value="ECO:0007669"/>
    <property type="project" value="UniProtKB-SubCell"/>
</dbReference>
<dbReference type="GO" id="GO:0019898">
    <property type="term" value="C:extrinsic component of membrane"/>
    <property type="evidence" value="ECO:0007669"/>
    <property type="project" value="InterPro"/>
</dbReference>
<dbReference type="GO" id="GO:0009523">
    <property type="term" value="C:photosystem II"/>
    <property type="evidence" value="ECO:0007669"/>
    <property type="project" value="UniProtKB-KW"/>
</dbReference>
<dbReference type="GO" id="GO:0015979">
    <property type="term" value="P:photosynthesis"/>
    <property type="evidence" value="ECO:0007669"/>
    <property type="project" value="UniProtKB-KW"/>
</dbReference>
<dbReference type="GO" id="GO:0042549">
    <property type="term" value="P:photosystem II stabilization"/>
    <property type="evidence" value="ECO:0007669"/>
    <property type="project" value="InterPro"/>
</dbReference>
<dbReference type="Gene3D" id="1.10.150.320">
    <property type="entry name" value="Photosystem II 12 kDa extrinsic protein"/>
    <property type="match status" value="1"/>
</dbReference>
<dbReference type="InterPro" id="IPR010527">
    <property type="entry name" value="PSII_PsbU"/>
</dbReference>
<dbReference type="Pfam" id="PF06514">
    <property type="entry name" value="PsbU"/>
    <property type="match status" value="1"/>
</dbReference>
<dbReference type="SUPFAM" id="SSF81585">
    <property type="entry name" value="PsbU/PolX domain-like"/>
    <property type="match status" value="1"/>
</dbReference>
<name>PSBU_KARBR</name>
<accession>Q00GL7</accession>
<feature type="transit peptide" description="Chloroplast" evidence="2">
    <location>
        <begin position="1"/>
        <end status="unknown"/>
    </location>
</feature>
<feature type="transit peptide" description="Thylakoid" evidence="2">
    <location>
        <begin status="unknown"/>
        <end position="64"/>
    </location>
</feature>
<feature type="chain" id="PRO_0000295791" description="Photosystem II extrinsic protein U, chloroplastic">
    <location>
        <begin position="65"/>
        <end position="159"/>
    </location>
</feature>
<reference key="1">
    <citation type="journal article" date="2006" name="Mol. Biol. Evol.">
        <title>Chimeric plastid proteome in the Florida 'red tide' dinoflagellate Karenia brevis.</title>
        <authorList>
            <person name="Nosenko T."/>
            <person name="Lidie K.L."/>
            <person name="Van Dolah F.M."/>
            <person name="Lindquist E."/>
            <person name="Cheng J.-F."/>
            <person name="Bhattacharya D."/>
        </authorList>
    </citation>
    <scope>NUCLEOTIDE SEQUENCE [MRNA]</scope>
    <source>
        <strain>Wilson</strain>
    </source>
</reference>
<proteinExistence type="evidence at transcript level"/>
<organism>
    <name type="scientific">Karenia brevis</name>
    <name type="common">Red tide dinoflagellate</name>
    <name type="synonym">Gymnodinium breve</name>
    <dbReference type="NCBI Taxonomy" id="156230"/>
    <lineage>
        <taxon>Eukaryota</taxon>
        <taxon>Sar</taxon>
        <taxon>Alveolata</taxon>
        <taxon>Dinophyceae</taxon>
        <taxon>Gymnodiniales</taxon>
        <taxon>Kareniaceae</taxon>
        <taxon>Karenia</taxon>
    </lineage>
</organism>
<protein>
    <recommendedName>
        <fullName evidence="4">Photosystem II extrinsic protein U, chloroplastic</fullName>
        <shortName evidence="4">PsbU</shortName>
    </recommendedName>
    <alternativeName>
        <fullName evidence="5">Photosystem II 12 kDa extrinsic protein</fullName>
        <shortName>PS II complex 12 kDa extrinsic protein</shortName>
    </alternativeName>
</protein>
<comment type="function">
    <text evidence="1">One of the extrinsic, lumenal subunits of photosystem II (PSII). PSII is a light-driven water plastoquinone oxidoreductase, using light energy to abstract electrons from H(2)O, generating a proton gradient subsequently used for ATP formation. The extrinsic proteins stabilize the structure of photosystem II oxygen-evolving complex (OEC), the ion environment of oxygen evolution and protect the OEC against heat-induced inactivation.</text>
</comment>
<comment type="subunit">
    <text evidence="1">PSII is composed of 1 copy each of membrane proteins PsbA, PsbB, PsbC, PsbD, PsbE, PsbF, PsbH, PsbI, PsbJ, PsbK, PsbL, PsbM, PsbT, PsbX, PsbY, PsbZ, Psb30/Ycf12, at least 3 peripheral proteins of the oxygen-evolving complex and a large number of cofactors. It forms dimeric complexes. Part of the oxygen-evolving complex of photosystem II.</text>
</comment>
<comment type="subcellular location">
    <subcellularLocation>
        <location evidence="1">Plastid</location>
        <location evidence="1">Chloroplast thylakoid membrane</location>
        <topology evidence="1">Peripheral membrane protein</topology>
        <orientation evidence="1">Lumenal side</orientation>
    </subcellularLocation>
</comment>
<comment type="similarity">
    <text evidence="4">Belongs to the PsbU family.</text>
</comment>
<gene>
    <name evidence="3" type="primary">psbU</name>
</gene>
<sequence>MQKMAMLMACLACMGLAAAFSPATLGVNKPSHRQQAPVMSQVARRELLSKVLGAAALLGAASADAKVNYDAVAYLGGAQQIDVNNANIRVYQKLPGMYPSAAGKLCTNGPYVDLKDMYAKAKLSKEEEAIVKEFDKDFLFLKPQIEYVVDNLNNGLYRR</sequence>
<keyword id="KW-0150">Chloroplast</keyword>
<keyword id="KW-0249">Electron transport</keyword>
<keyword id="KW-0472">Membrane</keyword>
<keyword id="KW-0602">Photosynthesis</keyword>
<keyword id="KW-0604">Photosystem II</keyword>
<keyword id="KW-0934">Plastid</keyword>
<keyword id="KW-0793">Thylakoid</keyword>
<keyword id="KW-0809">Transit peptide</keyword>
<keyword id="KW-0813">Transport</keyword>